<sequence>MRFVIVTGLSGAGKTEATRSLEDLGYFCVDNLPPKLIPKFAEACVQSEGKIDKIALVIDIRGGIFFDDLFESIEYLKANDFNYEILFLEASDEVLVKRFKETRRSHPLSPDGRIITGISEERMRLRELKDRADNIIDTSNYPIRNLREKINLLYGDGKPVEQNLSITVLSFGFKYGIPSDSDLVFDVRFIPNPFYIPELKPFSGEDEPVKNYVLAQEETKGFLSRLSDMAEFLIPNYIKEGKRQLIISIGCTGGRHRSVAIANALYKDLLCKNFHVTLEHRDINEDINRGDRKL</sequence>
<protein>
    <recommendedName>
        <fullName evidence="1">Nucleotide-binding protein CPR_0335</fullName>
    </recommendedName>
</protein>
<reference key="1">
    <citation type="journal article" date="2006" name="Genome Res.">
        <title>Skewed genomic variability in strains of the toxigenic bacterial pathogen, Clostridium perfringens.</title>
        <authorList>
            <person name="Myers G.S.A."/>
            <person name="Rasko D.A."/>
            <person name="Cheung J.K."/>
            <person name="Ravel J."/>
            <person name="Seshadri R."/>
            <person name="DeBoy R.T."/>
            <person name="Ren Q."/>
            <person name="Varga J."/>
            <person name="Awad M.M."/>
            <person name="Brinkac L.M."/>
            <person name="Daugherty S.C."/>
            <person name="Haft D.H."/>
            <person name="Dodson R.J."/>
            <person name="Madupu R."/>
            <person name="Nelson W.C."/>
            <person name="Rosovitz M.J."/>
            <person name="Sullivan S.A."/>
            <person name="Khouri H."/>
            <person name="Dimitrov G.I."/>
            <person name="Watkins K.L."/>
            <person name="Mulligan S."/>
            <person name="Benton J."/>
            <person name="Radune D."/>
            <person name="Fisher D.J."/>
            <person name="Atkins H.S."/>
            <person name="Hiscox T."/>
            <person name="Jost B.H."/>
            <person name="Billington S.J."/>
            <person name="Songer J.G."/>
            <person name="McClane B.A."/>
            <person name="Titball R.W."/>
            <person name="Rood J.I."/>
            <person name="Melville S.B."/>
            <person name="Paulsen I.T."/>
        </authorList>
    </citation>
    <scope>NUCLEOTIDE SEQUENCE [LARGE SCALE GENOMIC DNA]</scope>
    <source>
        <strain>SM101 / Type A</strain>
    </source>
</reference>
<feature type="chain" id="PRO_0000258955" description="Nucleotide-binding protein CPR_0335">
    <location>
        <begin position="1"/>
        <end position="294"/>
    </location>
</feature>
<feature type="binding site" evidence="1">
    <location>
        <begin position="8"/>
        <end position="15"/>
    </location>
    <ligand>
        <name>ATP</name>
        <dbReference type="ChEBI" id="CHEBI:30616"/>
    </ligand>
</feature>
<feature type="binding site" evidence="1">
    <location>
        <begin position="59"/>
        <end position="62"/>
    </location>
    <ligand>
        <name>GTP</name>
        <dbReference type="ChEBI" id="CHEBI:37565"/>
    </ligand>
</feature>
<keyword id="KW-0067">ATP-binding</keyword>
<keyword id="KW-0342">GTP-binding</keyword>
<keyword id="KW-0547">Nucleotide-binding</keyword>
<proteinExistence type="inferred from homology"/>
<organism>
    <name type="scientific">Clostridium perfringens (strain SM101 / Type A)</name>
    <dbReference type="NCBI Taxonomy" id="289380"/>
    <lineage>
        <taxon>Bacteria</taxon>
        <taxon>Bacillati</taxon>
        <taxon>Bacillota</taxon>
        <taxon>Clostridia</taxon>
        <taxon>Eubacteriales</taxon>
        <taxon>Clostridiaceae</taxon>
        <taxon>Clostridium</taxon>
    </lineage>
</organism>
<evidence type="ECO:0000255" key="1">
    <source>
        <dbReference type="HAMAP-Rule" id="MF_00636"/>
    </source>
</evidence>
<dbReference type="EMBL" id="CP000312">
    <property type="protein sequence ID" value="ABG87779.1"/>
    <property type="molecule type" value="Genomic_DNA"/>
</dbReference>
<dbReference type="SMR" id="Q0SW36"/>
<dbReference type="KEGG" id="cpr:CPR_0335"/>
<dbReference type="BioCyc" id="CPER289380:GI76-354-MONOMER"/>
<dbReference type="Proteomes" id="UP000001824">
    <property type="component" value="Chromosome"/>
</dbReference>
<dbReference type="GO" id="GO:0005524">
    <property type="term" value="F:ATP binding"/>
    <property type="evidence" value="ECO:0007669"/>
    <property type="project" value="UniProtKB-UniRule"/>
</dbReference>
<dbReference type="GO" id="GO:0005525">
    <property type="term" value="F:GTP binding"/>
    <property type="evidence" value="ECO:0007669"/>
    <property type="project" value="UniProtKB-UniRule"/>
</dbReference>
<dbReference type="Gene3D" id="3.40.50.300">
    <property type="entry name" value="P-loop containing nucleotide triphosphate hydrolases"/>
    <property type="match status" value="1"/>
</dbReference>
<dbReference type="HAMAP" id="MF_00636">
    <property type="entry name" value="RapZ_like"/>
    <property type="match status" value="1"/>
</dbReference>
<dbReference type="InterPro" id="IPR027417">
    <property type="entry name" value="P-loop_NTPase"/>
</dbReference>
<dbReference type="InterPro" id="IPR005337">
    <property type="entry name" value="RapZ-like"/>
</dbReference>
<dbReference type="InterPro" id="IPR053930">
    <property type="entry name" value="RapZ-like_N"/>
</dbReference>
<dbReference type="InterPro" id="IPR053931">
    <property type="entry name" value="RapZ_C"/>
</dbReference>
<dbReference type="NCBIfam" id="NF003828">
    <property type="entry name" value="PRK05416.1"/>
    <property type="match status" value="1"/>
</dbReference>
<dbReference type="PANTHER" id="PTHR30448">
    <property type="entry name" value="RNASE ADAPTER PROTEIN RAPZ"/>
    <property type="match status" value="1"/>
</dbReference>
<dbReference type="PANTHER" id="PTHR30448:SF0">
    <property type="entry name" value="RNASE ADAPTER PROTEIN RAPZ"/>
    <property type="match status" value="1"/>
</dbReference>
<dbReference type="Pfam" id="PF22740">
    <property type="entry name" value="PapZ_C"/>
    <property type="match status" value="1"/>
</dbReference>
<dbReference type="Pfam" id="PF03668">
    <property type="entry name" value="RapZ-like_N"/>
    <property type="match status" value="1"/>
</dbReference>
<dbReference type="PIRSF" id="PIRSF005052">
    <property type="entry name" value="P-loopkin"/>
    <property type="match status" value="1"/>
</dbReference>
<dbReference type="SUPFAM" id="SSF52540">
    <property type="entry name" value="P-loop containing nucleoside triphosphate hydrolases"/>
    <property type="match status" value="1"/>
</dbReference>
<comment type="function">
    <text evidence="1">Displays ATPase and GTPase activities.</text>
</comment>
<comment type="similarity">
    <text evidence="1">Belongs to the RapZ-like family.</text>
</comment>
<gene>
    <name type="ordered locus">CPR_0335</name>
</gene>
<accession>Q0SW36</accession>
<name>Y335_CLOPS</name>